<evidence type="ECO:0000255" key="1">
    <source>
        <dbReference type="HAMAP-Rule" id="MF_00134"/>
    </source>
</evidence>
<proteinExistence type="inferred from homology"/>
<accession>A5VXL5</accession>
<name>TRPC_PSEP1</name>
<gene>
    <name evidence="1" type="primary">trpC</name>
    <name type="ordered locus">Pput_0455</name>
</gene>
<feature type="chain" id="PRO_1000018535" description="Indole-3-glycerol phosphate synthase">
    <location>
        <begin position="1"/>
        <end position="277"/>
    </location>
</feature>
<reference key="1">
    <citation type="submission" date="2007-05" db="EMBL/GenBank/DDBJ databases">
        <title>Complete sequence of Pseudomonas putida F1.</title>
        <authorList>
            <consortium name="US DOE Joint Genome Institute"/>
            <person name="Copeland A."/>
            <person name="Lucas S."/>
            <person name="Lapidus A."/>
            <person name="Barry K."/>
            <person name="Detter J.C."/>
            <person name="Glavina del Rio T."/>
            <person name="Hammon N."/>
            <person name="Israni S."/>
            <person name="Dalin E."/>
            <person name="Tice H."/>
            <person name="Pitluck S."/>
            <person name="Chain P."/>
            <person name="Malfatti S."/>
            <person name="Shin M."/>
            <person name="Vergez L."/>
            <person name="Schmutz J."/>
            <person name="Larimer F."/>
            <person name="Land M."/>
            <person name="Hauser L."/>
            <person name="Kyrpides N."/>
            <person name="Lykidis A."/>
            <person name="Parales R."/>
            <person name="Richardson P."/>
        </authorList>
    </citation>
    <scope>NUCLEOTIDE SEQUENCE [LARGE SCALE GENOMIC DNA]</scope>
    <source>
        <strain>ATCC 700007 / DSM 6899 / JCM 31910 / BCRC 17059 / LMG 24140 / F1</strain>
    </source>
</reference>
<protein>
    <recommendedName>
        <fullName evidence="1">Indole-3-glycerol phosphate synthase</fullName>
        <shortName evidence="1">IGPS</shortName>
        <ecNumber evidence="1">4.1.1.48</ecNumber>
    </recommendedName>
</protein>
<dbReference type="EC" id="4.1.1.48" evidence="1"/>
<dbReference type="EMBL" id="CP000712">
    <property type="protein sequence ID" value="ABQ76625.1"/>
    <property type="molecule type" value="Genomic_DNA"/>
</dbReference>
<dbReference type="SMR" id="A5VXL5"/>
<dbReference type="KEGG" id="ppf:Pput_0455"/>
<dbReference type="eggNOG" id="COG0134">
    <property type="taxonomic scope" value="Bacteria"/>
</dbReference>
<dbReference type="HOGENOM" id="CLU_034247_2_0_6"/>
<dbReference type="UniPathway" id="UPA00035">
    <property type="reaction ID" value="UER00043"/>
</dbReference>
<dbReference type="GO" id="GO:0004425">
    <property type="term" value="F:indole-3-glycerol-phosphate synthase activity"/>
    <property type="evidence" value="ECO:0007669"/>
    <property type="project" value="UniProtKB-UniRule"/>
</dbReference>
<dbReference type="GO" id="GO:0004640">
    <property type="term" value="F:phosphoribosylanthranilate isomerase activity"/>
    <property type="evidence" value="ECO:0007669"/>
    <property type="project" value="TreeGrafter"/>
</dbReference>
<dbReference type="GO" id="GO:0000162">
    <property type="term" value="P:L-tryptophan biosynthetic process"/>
    <property type="evidence" value="ECO:0007669"/>
    <property type="project" value="UniProtKB-UniRule"/>
</dbReference>
<dbReference type="CDD" id="cd00331">
    <property type="entry name" value="IGPS"/>
    <property type="match status" value="1"/>
</dbReference>
<dbReference type="FunFam" id="3.20.20.70:FF:000024">
    <property type="entry name" value="Indole-3-glycerol phosphate synthase"/>
    <property type="match status" value="1"/>
</dbReference>
<dbReference type="Gene3D" id="3.20.20.70">
    <property type="entry name" value="Aldolase class I"/>
    <property type="match status" value="1"/>
</dbReference>
<dbReference type="HAMAP" id="MF_00134_B">
    <property type="entry name" value="IGPS_B"/>
    <property type="match status" value="1"/>
</dbReference>
<dbReference type="InterPro" id="IPR013785">
    <property type="entry name" value="Aldolase_TIM"/>
</dbReference>
<dbReference type="InterPro" id="IPR045186">
    <property type="entry name" value="Indole-3-glycerol_P_synth"/>
</dbReference>
<dbReference type="InterPro" id="IPR013798">
    <property type="entry name" value="Indole-3-glycerol_P_synth_dom"/>
</dbReference>
<dbReference type="InterPro" id="IPR001468">
    <property type="entry name" value="Indole-3-GlycerolPSynthase_CS"/>
</dbReference>
<dbReference type="InterPro" id="IPR011060">
    <property type="entry name" value="RibuloseP-bd_barrel"/>
</dbReference>
<dbReference type="NCBIfam" id="NF001370">
    <property type="entry name" value="PRK00278.1-2"/>
    <property type="match status" value="1"/>
</dbReference>
<dbReference type="NCBIfam" id="NF001373">
    <property type="entry name" value="PRK00278.1-6"/>
    <property type="match status" value="1"/>
</dbReference>
<dbReference type="NCBIfam" id="NF001377">
    <property type="entry name" value="PRK00278.2-4"/>
    <property type="match status" value="1"/>
</dbReference>
<dbReference type="PANTHER" id="PTHR22854:SF2">
    <property type="entry name" value="INDOLE-3-GLYCEROL-PHOSPHATE SYNTHASE"/>
    <property type="match status" value="1"/>
</dbReference>
<dbReference type="PANTHER" id="PTHR22854">
    <property type="entry name" value="TRYPTOPHAN BIOSYNTHESIS PROTEIN"/>
    <property type="match status" value="1"/>
</dbReference>
<dbReference type="Pfam" id="PF00218">
    <property type="entry name" value="IGPS"/>
    <property type="match status" value="1"/>
</dbReference>
<dbReference type="SUPFAM" id="SSF51366">
    <property type="entry name" value="Ribulose-phoshate binding barrel"/>
    <property type="match status" value="1"/>
</dbReference>
<dbReference type="PROSITE" id="PS00614">
    <property type="entry name" value="IGPS"/>
    <property type="match status" value="1"/>
</dbReference>
<sequence>MSVPTVLERIIARKFQEVAERSARVSLAELEGLAKAADAPRGFANALIEQAKRKQPAVIAEIKKASPSKGVIREHFVPAEIAVSYEKGGATCLSVLTDVDYFQGADEYLQQARAAVSLPVIRKDFMVDPYQIVEARALGADCVLLIVSALDDVKMAELAATAKDVGLDVLVEVHDGDELERALKTLDTPLVGVNNRNLHTFEVSLETTLDLLPRIPRDRLAITESGILNRADVELMAINEVYSFLVGEAFMRAEQPGLELQRLFFPEQVKKTVQQLD</sequence>
<comment type="catalytic activity">
    <reaction evidence="1">
        <text>1-(2-carboxyphenylamino)-1-deoxy-D-ribulose 5-phosphate + H(+) = (1S,2R)-1-C-(indol-3-yl)glycerol 3-phosphate + CO2 + H2O</text>
        <dbReference type="Rhea" id="RHEA:23476"/>
        <dbReference type="ChEBI" id="CHEBI:15377"/>
        <dbReference type="ChEBI" id="CHEBI:15378"/>
        <dbReference type="ChEBI" id="CHEBI:16526"/>
        <dbReference type="ChEBI" id="CHEBI:58613"/>
        <dbReference type="ChEBI" id="CHEBI:58866"/>
        <dbReference type="EC" id="4.1.1.48"/>
    </reaction>
</comment>
<comment type="pathway">
    <text evidence="1">Amino-acid biosynthesis; L-tryptophan biosynthesis; L-tryptophan from chorismate: step 4/5.</text>
</comment>
<comment type="similarity">
    <text evidence="1">Belongs to the TrpC family.</text>
</comment>
<organism>
    <name type="scientific">Pseudomonas putida (strain ATCC 700007 / DSM 6899 / JCM 31910 / BCRC 17059 / LMG 24140 / F1)</name>
    <dbReference type="NCBI Taxonomy" id="351746"/>
    <lineage>
        <taxon>Bacteria</taxon>
        <taxon>Pseudomonadati</taxon>
        <taxon>Pseudomonadota</taxon>
        <taxon>Gammaproteobacteria</taxon>
        <taxon>Pseudomonadales</taxon>
        <taxon>Pseudomonadaceae</taxon>
        <taxon>Pseudomonas</taxon>
    </lineage>
</organism>
<keyword id="KW-0028">Amino-acid biosynthesis</keyword>
<keyword id="KW-0057">Aromatic amino acid biosynthesis</keyword>
<keyword id="KW-0210">Decarboxylase</keyword>
<keyword id="KW-0456">Lyase</keyword>
<keyword id="KW-0822">Tryptophan biosynthesis</keyword>